<sequence>MSLLLEAERYVANQSSNRMLNAFITPLCRHSGRWHDQAKDADIRGKQGKLRSRLDGRFIAFKDNICTRDFPTTCASKSLDTFTSPFNATVVQQLEDAGAIVAGKTNLDEFGMGSHSIYSSFGHVMNTRRGDDSKFLSAGGSSGGNAVAVATDQCYAALGTDTGGSIRLPAAYTGTVGFKPSYGLLSRWGVIAYANSLDTVGILAKRVSVARDVFDVLNKHDPRDPTSISPSSRSRISSKLNLPQLTSRLTSRPLRIGIPLEYNISELAPSVRQAWCHSLEYLRQQGHTIQPVSLPMTKLALSAYYVLAPAEASSNLAKYDGVRYGTRSDDSTENQSETYLYAKTRGAGFGPEVKRRIMLGAFSLSAQAIDNYFIQAQRIRRLVRHDFDAAFQAEHPLAAEIRNVELRQQAKQTGIDVLISPTAPTPPPTISDITDTSTKRSNLDAYINDVFTVPASLAGLPAISVPVSGKDNAGNQEGDILAGIQVIGQYGDDELVLKVGELLERR</sequence>
<protein>
    <recommendedName>
        <fullName evidence="1">Glutamyl-tRNA(Gln) amidotransferase subunit A, mitochondrial</fullName>
        <shortName evidence="1">Glu-AdT subunit A</shortName>
        <ecNumber evidence="1">6.3.5.7</ecNumber>
    </recommendedName>
</protein>
<evidence type="ECO:0000255" key="1">
    <source>
        <dbReference type="HAMAP-Rule" id="MF_03150"/>
    </source>
</evidence>
<evidence type="ECO:0000305" key="2"/>
<comment type="function">
    <text evidence="1">Allows the formation of correctly charged Gln-tRNA(Gln) through the transamidation of misacylated Glu-tRNA(Gln) in the mitochondria. The reaction takes place in the presence of glutamine and ATP through an activated gamma-phospho-Glu-tRNA(Gln).</text>
</comment>
<comment type="catalytic activity">
    <reaction evidence="1">
        <text>L-glutamyl-tRNA(Gln) + L-glutamine + ATP + H2O = L-glutaminyl-tRNA(Gln) + L-glutamate + ADP + phosphate + H(+)</text>
        <dbReference type="Rhea" id="RHEA:17521"/>
        <dbReference type="Rhea" id="RHEA-COMP:9681"/>
        <dbReference type="Rhea" id="RHEA-COMP:9684"/>
        <dbReference type="ChEBI" id="CHEBI:15377"/>
        <dbReference type="ChEBI" id="CHEBI:15378"/>
        <dbReference type="ChEBI" id="CHEBI:29985"/>
        <dbReference type="ChEBI" id="CHEBI:30616"/>
        <dbReference type="ChEBI" id="CHEBI:43474"/>
        <dbReference type="ChEBI" id="CHEBI:58359"/>
        <dbReference type="ChEBI" id="CHEBI:78520"/>
        <dbReference type="ChEBI" id="CHEBI:78521"/>
        <dbReference type="ChEBI" id="CHEBI:456216"/>
        <dbReference type="EC" id="6.3.5.7"/>
    </reaction>
</comment>
<comment type="subunit">
    <text evidence="1">Subunit of the heterotrimeric GatCAB amidotransferase (AdT) complex, composed of A, B and C subunits.</text>
</comment>
<comment type="subcellular location">
    <subcellularLocation>
        <location evidence="1">Mitochondrion</location>
    </subcellularLocation>
</comment>
<comment type="similarity">
    <text evidence="1">Belongs to the amidase family. GatA subfamily.</text>
</comment>
<comment type="sequence caution" evidence="2">
    <conflict type="erroneous gene model prediction">
        <sequence resource="EMBL-CDS" id="CBF87540"/>
    </conflict>
</comment>
<comment type="sequence caution" evidence="2">
    <conflict type="erroneous gene model prediction">
        <sequence resource="EMBL-CDS" id="EAA66467"/>
    </conflict>
</comment>
<name>GATA_EMENI</name>
<reference key="1">
    <citation type="journal article" date="2005" name="Nature">
        <title>Sequencing of Aspergillus nidulans and comparative analysis with A. fumigatus and A. oryzae.</title>
        <authorList>
            <person name="Galagan J.E."/>
            <person name="Calvo S.E."/>
            <person name="Cuomo C."/>
            <person name="Ma L.-J."/>
            <person name="Wortman J.R."/>
            <person name="Batzoglou S."/>
            <person name="Lee S.-I."/>
            <person name="Bastuerkmen M."/>
            <person name="Spevak C.C."/>
            <person name="Clutterbuck J."/>
            <person name="Kapitonov V."/>
            <person name="Jurka J."/>
            <person name="Scazzocchio C."/>
            <person name="Farman M.L."/>
            <person name="Butler J."/>
            <person name="Purcell S."/>
            <person name="Harris S."/>
            <person name="Braus G.H."/>
            <person name="Draht O."/>
            <person name="Busch S."/>
            <person name="D'Enfert C."/>
            <person name="Bouchier C."/>
            <person name="Goldman G.H."/>
            <person name="Bell-Pedersen D."/>
            <person name="Griffiths-Jones S."/>
            <person name="Doonan J.H."/>
            <person name="Yu J."/>
            <person name="Vienken K."/>
            <person name="Pain A."/>
            <person name="Freitag M."/>
            <person name="Selker E.U."/>
            <person name="Archer D.B."/>
            <person name="Penalva M.A."/>
            <person name="Oakley B.R."/>
            <person name="Momany M."/>
            <person name="Tanaka T."/>
            <person name="Kumagai T."/>
            <person name="Asai K."/>
            <person name="Machida M."/>
            <person name="Nierman W.C."/>
            <person name="Denning D.W."/>
            <person name="Caddick M.X."/>
            <person name="Hynes M."/>
            <person name="Paoletti M."/>
            <person name="Fischer R."/>
            <person name="Miller B.L."/>
            <person name="Dyer P.S."/>
            <person name="Sachs M.S."/>
            <person name="Osmani S.A."/>
            <person name="Birren B.W."/>
        </authorList>
    </citation>
    <scope>NUCLEOTIDE SEQUENCE [LARGE SCALE GENOMIC DNA]</scope>
    <source>
        <strain>FGSC A4 / ATCC 38163 / CBS 112.46 / NRRL 194 / M139</strain>
    </source>
</reference>
<reference key="2">
    <citation type="journal article" date="2009" name="Fungal Genet. Biol.">
        <title>The 2008 update of the Aspergillus nidulans genome annotation: a community effort.</title>
        <authorList>
            <person name="Wortman J.R."/>
            <person name="Gilsenan J.M."/>
            <person name="Joardar V."/>
            <person name="Deegan J."/>
            <person name="Clutterbuck J."/>
            <person name="Andersen M.R."/>
            <person name="Archer D."/>
            <person name="Bencina M."/>
            <person name="Braus G."/>
            <person name="Coutinho P."/>
            <person name="von Dohren H."/>
            <person name="Doonan J."/>
            <person name="Driessen A.J."/>
            <person name="Durek P."/>
            <person name="Espeso E."/>
            <person name="Fekete E."/>
            <person name="Flipphi M."/>
            <person name="Estrada C.G."/>
            <person name="Geysens S."/>
            <person name="Goldman G."/>
            <person name="de Groot P.W."/>
            <person name="Hansen K."/>
            <person name="Harris S.D."/>
            <person name="Heinekamp T."/>
            <person name="Helmstaedt K."/>
            <person name="Henrissat B."/>
            <person name="Hofmann G."/>
            <person name="Homan T."/>
            <person name="Horio T."/>
            <person name="Horiuchi H."/>
            <person name="James S."/>
            <person name="Jones M."/>
            <person name="Karaffa L."/>
            <person name="Karanyi Z."/>
            <person name="Kato M."/>
            <person name="Keller N."/>
            <person name="Kelly D.E."/>
            <person name="Kiel J.A."/>
            <person name="Kim J.M."/>
            <person name="van der Klei I.J."/>
            <person name="Klis F.M."/>
            <person name="Kovalchuk A."/>
            <person name="Krasevec N."/>
            <person name="Kubicek C.P."/>
            <person name="Liu B."/>
            <person name="Maccabe A."/>
            <person name="Meyer V."/>
            <person name="Mirabito P."/>
            <person name="Miskei M."/>
            <person name="Mos M."/>
            <person name="Mullins J."/>
            <person name="Nelson D.R."/>
            <person name="Nielsen J."/>
            <person name="Oakley B.R."/>
            <person name="Osmani S.A."/>
            <person name="Pakula T."/>
            <person name="Paszewski A."/>
            <person name="Paulsen I."/>
            <person name="Pilsyk S."/>
            <person name="Pocsi I."/>
            <person name="Punt P.J."/>
            <person name="Ram A.F."/>
            <person name="Ren Q."/>
            <person name="Robellet X."/>
            <person name="Robson G."/>
            <person name="Seiboth B."/>
            <person name="van Solingen P."/>
            <person name="Specht T."/>
            <person name="Sun J."/>
            <person name="Taheri-Talesh N."/>
            <person name="Takeshita N."/>
            <person name="Ussery D."/>
            <person name="vanKuyk P.A."/>
            <person name="Visser H."/>
            <person name="van de Vondervoort P.J."/>
            <person name="de Vries R.P."/>
            <person name="Walton J."/>
            <person name="Xiang X."/>
            <person name="Xiong Y."/>
            <person name="Zeng A.P."/>
            <person name="Brandt B.W."/>
            <person name="Cornell M.J."/>
            <person name="van den Hondel C.A."/>
            <person name="Visser J."/>
            <person name="Oliver S.G."/>
            <person name="Turner G."/>
        </authorList>
    </citation>
    <scope>GENOME REANNOTATION</scope>
    <source>
        <strain>FGSC A4 / ATCC 38163 / CBS 112.46 / NRRL 194 / M139</strain>
    </source>
</reference>
<keyword id="KW-0067">ATP-binding</keyword>
<keyword id="KW-0436">Ligase</keyword>
<keyword id="KW-0496">Mitochondrion</keyword>
<keyword id="KW-0547">Nucleotide-binding</keyword>
<keyword id="KW-0648">Protein biosynthesis</keyword>
<keyword id="KW-1185">Reference proteome</keyword>
<feature type="chain" id="PRO_0000413353" description="Glutamyl-tRNA(Gln) amidotransferase subunit A, mitochondrial">
    <location>
        <begin position="1"/>
        <end position="506"/>
    </location>
</feature>
<feature type="active site" description="Charge relay system" evidence="1">
    <location>
        <position position="62"/>
    </location>
</feature>
<feature type="active site" description="Charge relay system" evidence="1">
    <location>
        <position position="141"/>
    </location>
</feature>
<feature type="active site" description="Acyl-ester intermediate" evidence="1">
    <location>
        <position position="165"/>
    </location>
</feature>
<dbReference type="EC" id="6.3.5.7" evidence="1"/>
<dbReference type="EMBL" id="AACD01000172">
    <property type="protein sequence ID" value="EAA66467.1"/>
    <property type="status" value="ALT_SEQ"/>
    <property type="molecule type" value="Genomic_DNA"/>
</dbReference>
<dbReference type="EMBL" id="BN001308">
    <property type="protein sequence ID" value="CBF87540.1"/>
    <property type="status" value="ALT_SEQ"/>
    <property type="molecule type" value="Genomic_DNA"/>
</dbReference>
<dbReference type="RefSeq" id="XP_682669.1">
    <property type="nucleotide sequence ID" value="XM_677577.1"/>
</dbReference>
<dbReference type="SMR" id="Q5AQN0"/>
<dbReference type="FunCoup" id="Q5AQN0">
    <property type="interactions" value="324"/>
</dbReference>
<dbReference type="STRING" id="227321.Q5AQN0"/>
<dbReference type="KEGG" id="ani:ANIA_09400"/>
<dbReference type="eggNOG" id="KOG1211">
    <property type="taxonomic scope" value="Eukaryota"/>
</dbReference>
<dbReference type="HOGENOM" id="CLU_009600_7_6_1"/>
<dbReference type="InParanoid" id="Q5AQN0"/>
<dbReference type="OrthoDB" id="421993at2759"/>
<dbReference type="Proteomes" id="UP000000560">
    <property type="component" value="Chromosome VIII"/>
</dbReference>
<dbReference type="GO" id="GO:0030956">
    <property type="term" value="C:glutamyl-tRNA(Gln) amidotransferase complex"/>
    <property type="evidence" value="ECO:0000318"/>
    <property type="project" value="GO_Central"/>
</dbReference>
<dbReference type="GO" id="GO:0005739">
    <property type="term" value="C:mitochondrion"/>
    <property type="evidence" value="ECO:0000318"/>
    <property type="project" value="GO_Central"/>
</dbReference>
<dbReference type="GO" id="GO:0005524">
    <property type="term" value="F:ATP binding"/>
    <property type="evidence" value="ECO:0007669"/>
    <property type="project" value="UniProtKB-KW"/>
</dbReference>
<dbReference type="GO" id="GO:0050567">
    <property type="term" value="F:glutaminyl-tRNA synthase (glutamine-hydrolyzing) activity"/>
    <property type="evidence" value="ECO:0000318"/>
    <property type="project" value="GO_Central"/>
</dbReference>
<dbReference type="GO" id="GO:0070681">
    <property type="term" value="P:glutaminyl-tRNAGln biosynthesis via transamidation"/>
    <property type="evidence" value="ECO:0000318"/>
    <property type="project" value="GO_Central"/>
</dbReference>
<dbReference type="GO" id="GO:0032543">
    <property type="term" value="P:mitochondrial translation"/>
    <property type="evidence" value="ECO:0000318"/>
    <property type="project" value="GO_Central"/>
</dbReference>
<dbReference type="Gene3D" id="3.90.1300.10">
    <property type="entry name" value="Amidase signature (AS) domain"/>
    <property type="match status" value="1"/>
</dbReference>
<dbReference type="HAMAP" id="MF_00120">
    <property type="entry name" value="GatA"/>
    <property type="match status" value="1"/>
</dbReference>
<dbReference type="InterPro" id="IPR000120">
    <property type="entry name" value="Amidase"/>
</dbReference>
<dbReference type="InterPro" id="IPR020556">
    <property type="entry name" value="Amidase_CS"/>
</dbReference>
<dbReference type="InterPro" id="IPR023631">
    <property type="entry name" value="Amidase_dom"/>
</dbReference>
<dbReference type="InterPro" id="IPR036928">
    <property type="entry name" value="AS_sf"/>
</dbReference>
<dbReference type="InterPro" id="IPR004412">
    <property type="entry name" value="GatA"/>
</dbReference>
<dbReference type="PANTHER" id="PTHR11895:SF7">
    <property type="entry name" value="GLUTAMYL-TRNA(GLN) AMIDOTRANSFERASE SUBUNIT A, MITOCHONDRIAL"/>
    <property type="match status" value="1"/>
</dbReference>
<dbReference type="PANTHER" id="PTHR11895">
    <property type="entry name" value="TRANSAMIDASE"/>
    <property type="match status" value="1"/>
</dbReference>
<dbReference type="Pfam" id="PF01425">
    <property type="entry name" value="Amidase"/>
    <property type="match status" value="1"/>
</dbReference>
<dbReference type="SUPFAM" id="SSF75304">
    <property type="entry name" value="Amidase signature (AS) enzymes"/>
    <property type="match status" value="1"/>
</dbReference>
<dbReference type="PROSITE" id="PS00571">
    <property type="entry name" value="AMIDASES"/>
    <property type="match status" value="1"/>
</dbReference>
<accession>Q5AQN0</accession>
<accession>C8VRK3</accession>
<proteinExistence type="inferred from homology"/>
<organism>
    <name type="scientific">Emericella nidulans (strain FGSC A4 / ATCC 38163 / CBS 112.46 / NRRL 194 / M139)</name>
    <name type="common">Aspergillus nidulans</name>
    <dbReference type="NCBI Taxonomy" id="227321"/>
    <lineage>
        <taxon>Eukaryota</taxon>
        <taxon>Fungi</taxon>
        <taxon>Dikarya</taxon>
        <taxon>Ascomycota</taxon>
        <taxon>Pezizomycotina</taxon>
        <taxon>Eurotiomycetes</taxon>
        <taxon>Eurotiomycetidae</taxon>
        <taxon>Eurotiales</taxon>
        <taxon>Aspergillaceae</taxon>
        <taxon>Aspergillus</taxon>
        <taxon>Aspergillus subgen. Nidulantes</taxon>
    </lineage>
</organism>
<gene>
    <name type="ORF">AN9400</name>
</gene>